<name>SECY_RICBR</name>
<proteinExistence type="inferred from homology"/>
<evidence type="ECO:0000255" key="1">
    <source>
        <dbReference type="HAMAP-Rule" id="MF_01465"/>
    </source>
</evidence>
<reference key="1">
    <citation type="journal article" date="2006" name="PLoS Genet.">
        <title>Genome sequence of Rickettsia bellii illuminates the role of amoebae in gene exchanges between intracellular pathogens.</title>
        <authorList>
            <person name="Ogata H."/>
            <person name="La Scola B."/>
            <person name="Audic S."/>
            <person name="Renesto P."/>
            <person name="Blanc G."/>
            <person name="Robert C."/>
            <person name="Fournier P.-E."/>
            <person name="Claverie J.-M."/>
            <person name="Raoult D."/>
        </authorList>
    </citation>
    <scope>NUCLEOTIDE SEQUENCE [LARGE SCALE GENOMIC DNA]</scope>
    <source>
        <strain>RML369-C</strain>
    </source>
</reference>
<accession>Q1RHP1</accession>
<comment type="function">
    <text evidence="1">The central subunit of the protein translocation channel SecYEG. Consists of two halves formed by TMs 1-5 and 6-10. These two domains form a lateral gate at the front which open onto the bilayer between TMs 2 and 7, and are clamped together by SecE at the back. The channel is closed by both a pore ring composed of hydrophobic SecY resides and a short helix (helix 2A) on the extracellular side of the membrane which forms a plug. The plug probably moves laterally to allow the channel to open. The ring and the pore may move independently.</text>
</comment>
<comment type="subunit">
    <text evidence="1">Component of the Sec protein translocase complex. Heterotrimer consisting of SecY, SecE and SecG subunits. The heterotrimers can form oligomers, although 1 heterotrimer is thought to be able to translocate proteins. Interacts with the ribosome. Interacts with SecDF, and other proteins may be involved. Interacts with SecA.</text>
</comment>
<comment type="subcellular location">
    <subcellularLocation>
        <location evidence="1">Cell inner membrane</location>
        <topology evidence="1">Multi-pass membrane protein</topology>
    </subcellularLocation>
</comment>
<comment type="similarity">
    <text evidence="1">Belongs to the SecY/SEC61-alpha family.</text>
</comment>
<feature type="chain" id="PRO_0000277279" description="Protein translocase subunit SecY">
    <location>
        <begin position="1"/>
        <end position="433"/>
    </location>
</feature>
<feature type="transmembrane region" description="Helical" evidence="1">
    <location>
        <begin position="17"/>
        <end position="37"/>
    </location>
</feature>
<feature type="transmembrane region" description="Helical" evidence="1">
    <location>
        <begin position="71"/>
        <end position="91"/>
    </location>
</feature>
<feature type="transmembrane region" description="Helical" evidence="1">
    <location>
        <begin position="117"/>
        <end position="137"/>
    </location>
</feature>
<feature type="transmembrane region" description="Helical" evidence="1">
    <location>
        <begin position="141"/>
        <end position="161"/>
    </location>
</feature>
<feature type="transmembrane region" description="Helical" evidence="1">
    <location>
        <begin position="184"/>
        <end position="204"/>
    </location>
</feature>
<feature type="transmembrane region" description="Helical" evidence="1">
    <location>
        <begin position="212"/>
        <end position="232"/>
    </location>
</feature>
<feature type="transmembrane region" description="Helical" evidence="1">
    <location>
        <begin position="268"/>
        <end position="288"/>
    </location>
</feature>
<feature type="transmembrane region" description="Helical" evidence="1">
    <location>
        <begin position="309"/>
        <end position="329"/>
    </location>
</feature>
<feature type="transmembrane region" description="Helical" evidence="1">
    <location>
        <begin position="366"/>
        <end position="386"/>
    </location>
</feature>
<feature type="transmembrane region" description="Helical" evidence="1">
    <location>
        <begin position="388"/>
        <end position="408"/>
    </location>
</feature>
<organism>
    <name type="scientific">Rickettsia bellii (strain RML369-C)</name>
    <dbReference type="NCBI Taxonomy" id="336407"/>
    <lineage>
        <taxon>Bacteria</taxon>
        <taxon>Pseudomonadati</taxon>
        <taxon>Pseudomonadota</taxon>
        <taxon>Alphaproteobacteria</taxon>
        <taxon>Rickettsiales</taxon>
        <taxon>Rickettsiaceae</taxon>
        <taxon>Rickettsieae</taxon>
        <taxon>Rickettsia</taxon>
        <taxon>belli group</taxon>
    </lineage>
</organism>
<sequence length="433" mass="47470">MNQNFSKKSSNDLINRIIFTIFVLIICRFGSFIPIAGIDAIALGSIAEKNQSGILGMFNMLSGGSLGRMSIFALAIMPYITASIIIQLMSVAYKPLENLKKEGEAGKRKINQLSRYLTVLLASLQAYGVAVSLESIVTNTGPVVIIPGLFFKITTVITLVVGTMLLMWLGEQITQRGIGNGTSLIIFIGIISGVPSAIISMFELSRKGALSPLVAIAVCAGVVILISIIIFFEKAQRKLLVQYPKRQVGNKIYGGDSTYMPLKLNTSGVIPPIFASSILLFPATLANFSSSNSEIMNMLTYYLGHGKPIYILLYVALIMFFSFFYTAIVFNSEETANNLRKYGAYIPGKRPGKNTSEYFDYILTRLTVVGGIYLSVICIIPELLMNKYVISLSLGGTSFLIVVNVVLDTLTQIQTYLFSSKYESLMKKVKLKN</sequence>
<dbReference type="EMBL" id="CP000087">
    <property type="protein sequence ID" value="ABE05123.1"/>
    <property type="molecule type" value="Genomic_DNA"/>
</dbReference>
<dbReference type="RefSeq" id="WP_011477701.1">
    <property type="nucleotide sequence ID" value="NC_007940.1"/>
</dbReference>
<dbReference type="SMR" id="Q1RHP1"/>
<dbReference type="KEGG" id="rbe:RBE_1042"/>
<dbReference type="eggNOG" id="COG0201">
    <property type="taxonomic scope" value="Bacteria"/>
</dbReference>
<dbReference type="HOGENOM" id="CLU_030313_0_2_5"/>
<dbReference type="OrthoDB" id="9809248at2"/>
<dbReference type="Proteomes" id="UP000001951">
    <property type="component" value="Chromosome"/>
</dbReference>
<dbReference type="GO" id="GO:0005886">
    <property type="term" value="C:plasma membrane"/>
    <property type="evidence" value="ECO:0007669"/>
    <property type="project" value="UniProtKB-SubCell"/>
</dbReference>
<dbReference type="GO" id="GO:0065002">
    <property type="term" value="P:intracellular protein transmembrane transport"/>
    <property type="evidence" value="ECO:0007669"/>
    <property type="project" value="UniProtKB-UniRule"/>
</dbReference>
<dbReference type="GO" id="GO:0006605">
    <property type="term" value="P:protein targeting"/>
    <property type="evidence" value="ECO:0007669"/>
    <property type="project" value="UniProtKB-UniRule"/>
</dbReference>
<dbReference type="GO" id="GO:0043952">
    <property type="term" value="P:protein transport by the Sec complex"/>
    <property type="evidence" value="ECO:0007669"/>
    <property type="project" value="UniProtKB-UniRule"/>
</dbReference>
<dbReference type="FunFam" id="1.10.3370.10:FF:000001">
    <property type="entry name" value="Preprotein translocase subunit SecY"/>
    <property type="match status" value="1"/>
</dbReference>
<dbReference type="Gene3D" id="1.10.3370.10">
    <property type="entry name" value="SecY subunit domain"/>
    <property type="match status" value="1"/>
</dbReference>
<dbReference type="HAMAP" id="MF_01465">
    <property type="entry name" value="SecY"/>
    <property type="match status" value="1"/>
</dbReference>
<dbReference type="InterPro" id="IPR026593">
    <property type="entry name" value="SecY"/>
</dbReference>
<dbReference type="InterPro" id="IPR002208">
    <property type="entry name" value="SecY/SEC61-alpha"/>
</dbReference>
<dbReference type="InterPro" id="IPR030659">
    <property type="entry name" value="SecY_CS"/>
</dbReference>
<dbReference type="InterPro" id="IPR023201">
    <property type="entry name" value="SecY_dom_sf"/>
</dbReference>
<dbReference type="NCBIfam" id="TIGR00967">
    <property type="entry name" value="3a0501s007"/>
    <property type="match status" value="1"/>
</dbReference>
<dbReference type="PANTHER" id="PTHR10906">
    <property type="entry name" value="SECY/SEC61-ALPHA FAMILY MEMBER"/>
    <property type="match status" value="1"/>
</dbReference>
<dbReference type="Pfam" id="PF00344">
    <property type="entry name" value="SecY"/>
    <property type="match status" value="1"/>
</dbReference>
<dbReference type="PIRSF" id="PIRSF004557">
    <property type="entry name" value="SecY"/>
    <property type="match status" value="1"/>
</dbReference>
<dbReference type="PRINTS" id="PR00303">
    <property type="entry name" value="SECYTRNLCASE"/>
</dbReference>
<dbReference type="SUPFAM" id="SSF103491">
    <property type="entry name" value="Preprotein translocase SecY subunit"/>
    <property type="match status" value="1"/>
</dbReference>
<dbReference type="PROSITE" id="PS00755">
    <property type="entry name" value="SECY_1"/>
    <property type="match status" value="1"/>
</dbReference>
<dbReference type="PROSITE" id="PS00756">
    <property type="entry name" value="SECY_2"/>
    <property type="match status" value="1"/>
</dbReference>
<keyword id="KW-0997">Cell inner membrane</keyword>
<keyword id="KW-1003">Cell membrane</keyword>
<keyword id="KW-0472">Membrane</keyword>
<keyword id="KW-0653">Protein transport</keyword>
<keyword id="KW-0811">Translocation</keyword>
<keyword id="KW-0812">Transmembrane</keyword>
<keyword id="KW-1133">Transmembrane helix</keyword>
<keyword id="KW-0813">Transport</keyword>
<protein>
    <recommendedName>
        <fullName evidence="1">Protein translocase subunit SecY</fullName>
    </recommendedName>
</protein>
<gene>
    <name evidence="1" type="primary">secY</name>
    <name type="ordered locus">RBE_1042</name>
</gene>